<name>KPST5_ECOLX</name>
<protein>
    <recommendedName>
        <fullName>Polysialic acid transport ATP-binding protein KpsT</fullName>
    </recommendedName>
</protein>
<reference key="1">
    <citation type="journal article" date="1990" name="Mol. Microbiol.">
        <title>Molecular analysis of the Escherichia coli K5 kps locus: identification and characterization of an inner-membrane capsular polysaccharide transport system.</title>
        <authorList>
            <person name="Smith A.N."/>
            <person name="Boulnois G.J."/>
            <person name="Roberts I.S."/>
        </authorList>
    </citation>
    <scope>NUCLEOTIDE SEQUENCE [GENOMIC DNA]</scope>
    <source>
        <strain>K5</strain>
    </source>
</reference>
<proteinExistence type="inferred from homology"/>
<dbReference type="EMBL" id="X53819">
    <property type="protein sequence ID" value="CAA37816.1"/>
    <property type="molecule type" value="Genomic_DNA"/>
</dbReference>
<dbReference type="PIR" id="S12237">
    <property type="entry name" value="S12237"/>
</dbReference>
<dbReference type="RefSeq" id="WP_001521310.1">
    <property type="nucleotide sequence ID" value="NZ_UGDF01000003.1"/>
</dbReference>
<dbReference type="SMR" id="P24586"/>
<dbReference type="TCDB" id="3.A.1.101.1">
    <property type="family name" value="the atp-binding cassette (abc) superfamily"/>
</dbReference>
<dbReference type="GO" id="GO:0005886">
    <property type="term" value="C:plasma membrane"/>
    <property type="evidence" value="ECO:0007669"/>
    <property type="project" value="UniProtKB-SubCell"/>
</dbReference>
<dbReference type="GO" id="GO:0140359">
    <property type="term" value="F:ABC-type transporter activity"/>
    <property type="evidence" value="ECO:0007669"/>
    <property type="project" value="InterPro"/>
</dbReference>
<dbReference type="GO" id="GO:0005524">
    <property type="term" value="F:ATP binding"/>
    <property type="evidence" value="ECO:0007669"/>
    <property type="project" value="UniProtKB-KW"/>
</dbReference>
<dbReference type="GO" id="GO:0016887">
    <property type="term" value="F:ATP hydrolysis activity"/>
    <property type="evidence" value="ECO:0007669"/>
    <property type="project" value="InterPro"/>
</dbReference>
<dbReference type="CDD" id="cd03220">
    <property type="entry name" value="ABC_KpsT_Wzt"/>
    <property type="match status" value="1"/>
</dbReference>
<dbReference type="Gene3D" id="3.40.50.300">
    <property type="entry name" value="P-loop containing nucleotide triphosphate hydrolases"/>
    <property type="match status" value="1"/>
</dbReference>
<dbReference type="InterPro" id="IPR003593">
    <property type="entry name" value="AAA+_ATPase"/>
</dbReference>
<dbReference type="InterPro" id="IPR003439">
    <property type="entry name" value="ABC_transporter-like_ATP-bd"/>
</dbReference>
<dbReference type="InterPro" id="IPR017871">
    <property type="entry name" value="ABC_transporter-like_CS"/>
</dbReference>
<dbReference type="InterPro" id="IPR015860">
    <property type="entry name" value="ABC_transpr_TagH-like"/>
</dbReference>
<dbReference type="InterPro" id="IPR050683">
    <property type="entry name" value="Bact_Polysacc_Export_ATP-bd"/>
</dbReference>
<dbReference type="InterPro" id="IPR027417">
    <property type="entry name" value="P-loop_NTPase"/>
</dbReference>
<dbReference type="PANTHER" id="PTHR46743">
    <property type="entry name" value="TEICHOIC ACIDS EXPORT ATP-BINDING PROTEIN TAGH"/>
    <property type="match status" value="1"/>
</dbReference>
<dbReference type="PANTHER" id="PTHR46743:SF2">
    <property type="entry name" value="TEICHOIC ACIDS EXPORT ATP-BINDING PROTEIN TAGH"/>
    <property type="match status" value="1"/>
</dbReference>
<dbReference type="Pfam" id="PF00005">
    <property type="entry name" value="ABC_tran"/>
    <property type="match status" value="1"/>
</dbReference>
<dbReference type="SMART" id="SM00382">
    <property type="entry name" value="AAA"/>
    <property type="match status" value="1"/>
</dbReference>
<dbReference type="SUPFAM" id="SSF52540">
    <property type="entry name" value="P-loop containing nucleoside triphosphate hydrolases"/>
    <property type="match status" value="1"/>
</dbReference>
<dbReference type="PROSITE" id="PS00211">
    <property type="entry name" value="ABC_TRANSPORTER_1"/>
    <property type="match status" value="1"/>
</dbReference>
<dbReference type="PROSITE" id="PS50893">
    <property type="entry name" value="ABC_TRANSPORTER_2"/>
    <property type="match status" value="1"/>
</dbReference>
<keyword id="KW-0067">ATP-binding</keyword>
<keyword id="KW-0997">Cell inner membrane</keyword>
<keyword id="KW-1003">Cell membrane</keyword>
<keyword id="KW-0472">Membrane</keyword>
<keyword id="KW-0547">Nucleotide-binding</keyword>
<keyword id="KW-0813">Transport</keyword>
<feature type="chain" id="PRO_0000092395" description="Polysialic acid transport ATP-binding protein KpsT">
    <location>
        <begin position="1"/>
        <end position="224"/>
    </location>
</feature>
<feature type="domain" description="ABC transporter" evidence="1">
    <location>
        <begin position="2"/>
        <end position="223"/>
    </location>
</feature>
<feature type="binding site" evidence="1">
    <location>
        <begin position="38"/>
        <end position="45"/>
    </location>
    <ligand>
        <name>ATP</name>
        <dbReference type="ChEBI" id="CHEBI:30616"/>
    </ligand>
</feature>
<gene>
    <name type="primary">kpsT</name>
</gene>
<organism>
    <name type="scientific">Escherichia coli</name>
    <dbReference type="NCBI Taxonomy" id="562"/>
    <lineage>
        <taxon>Bacteria</taxon>
        <taxon>Pseudomonadati</taxon>
        <taxon>Pseudomonadota</taxon>
        <taxon>Gammaproteobacteria</taxon>
        <taxon>Enterobacterales</taxon>
        <taxon>Enterobacteriaceae</taxon>
        <taxon>Escherichia</taxon>
    </lineage>
</organism>
<comment type="function">
    <text>Putative ATP-binding protein, and an energy coupling component for the transport of polysialic acid across the cytoplasmic membrane.</text>
</comment>
<comment type="subcellular location">
    <subcellularLocation>
        <location>Cell inner membrane</location>
        <topology>Peripheral membrane protein</topology>
    </subcellularLocation>
</comment>
<comment type="similarity">
    <text evidence="2">Belongs to the ABC transporter superfamily.</text>
</comment>
<accession>P24586</accession>
<sequence>MIKIENLTKSYRTPTGRHYVFKDLNIEIPSGKSVAFIGRNGAGKSTLLRMIGGIDRPDSGKIITNKTISWPVGLAGGFQGSLTGRENVKFVARLYAKQEELKEKIEFVEEFAELGKYFDMPIKTYSSGMRSRLGFGLSMAFKFDYYIVDEVTAVGDARFKEKCAQLFKERHKESSFLMVSHSLNSLKEFCDVAIVFKNSYIIGYYENVQSGIDEYKMYQDLDIE</sequence>
<evidence type="ECO:0000255" key="1">
    <source>
        <dbReference type="PROSITE-ProRule" id="PRU00434"/>
    </source>
</evidence>
<evidence type="ECO:0000305" key="2"/>